<evidence type="ECO:0000255" key="1">
    <source>
        <dbReference type="HAMAP-Rule" id="MF_01334"/>
    </source>
</evidence>
<evidence type="ECO:0000305" key="2"/>
<proteinExistence type="inferred from homology"/>
<reference key="1">
    <citation type="journal article" date="2005" name="Arch. Microbiol.">
        <title>The genome sequence of an anaerobic aromatic-degrading denitrifying bacterium, strain EbN1.</title>
        <authorList>
            <person name="Rabus R."/>
            <person name="Kube M."/>
            <person name="Heider J."/>
            <person name="Beck A."/>
            <person name="Heitmann K."/>
            <person name="Widdel F."/>
            <person name="Reinhardt R."/>
        </authorList>
    </citation>
    <scope>NUCLEOTIDE SEQUENCE [LARGE SCALE GENOMIC DNA]</scope>
    <source>
        <strain>DSM 19018 / LMG 30748 / EbN1</strain>
    </source>
</reference>
<keyword id="KW-1185">Reference proteome</keyword>
<keyword id="KW-0687">Ribonucleoprotein</keyword>
<keyword id="KW-0689">Ribosomal protein</keyword>
<keyword id="KW-0694">RNA-binding</keyword>
<keyword id="KW-0699">rRNA-binding</keyword>
<gene>
    <name evidence="1" type="primary">rplY</name>
    <name evidence="1" type="synonym">ctc</name>
    <name type="ordered locus">AZOSEA07650</name>
    <name type="ORF">ebA1409</name>
</gene>
<dbReference type="EMBL" id="CR555306">
    <property type="protein sequence ID" value="CAI06888.1"/>
    <property type="molecule type" value="Genomic_DNA"/>
</dbReference>
<dbReference type="RefSeq" id="WP_011236616.1">
    <property type="nucleotide sequence ID" value="NC_006513.1"/>
</dbReference>
<dbReference type="SMR" id="Q5P723"/>
<dbReference type="STRING" id="76114.ebA1409"/>
<dbReference type="KEGG" id="eba:ebA1409"/>
<dbReference type="eggNOG" id="COG1825">
    <property type="taxonomic scope" value="Bacteria"/>
</dbReference>
<dbReference type="HOGENOM" id="CLU_075939_0_1_4"/>
<dbReference type="OrthoDB" id="9806411at2"/>
<dbReference type="Proteomes" id="UP000006552">
    <property type="component" value="Chromosome"/>
</dbReference>
<dbReference type="GO" id="GO:0022625">
    <property type="term" value="C:cytosolic large ribosomal subunit"/>
    <property type="evidence" value="ECO:0007669"/>
    <property type="project" value="TreeGrafter"/>
</dbReference>
<dbReference type="GO" id="GO:0008097">
    <property type="term" value="F:5S rRNA binding"/>
    <property type="evidence" value="ECO:0007669"/>
    <property type="project" value="InterPro"/>
</dbReference>
<dbReference type="GO" id="GO:0003735">
    <property type="term" value="F:structural constituent of ribosome"/>
    <property type="evidence" value="ECO:0007669"/>
    <property type="project" value="InterPro"/>
</dbReference>
<dbReference type="GO" id="GO:0006412">
    <property type="term" value="P:translation"/>
    <property type="evidence" value="ECO:0007669"/>
    <property type="project" value="UniProtKB-UniRule"/>
</dbReference>
<dbReference type="CDD" id="cd00495">
    <property type="entry name" value="Ribosomal_L25_TL5_CTC"/>
    <property type="match status" value="1"/>
</dbReference>
<dbReference type="Gene3D" id="2.170.120.20">
    <property type="entry name" value="Ribosomal protein L25, beta domain"/>
    <property type="match status" value="1"/>
</dbReference>
<dbReference type="Gene3D" id="2.40.240.10">
    <property type="entry name" value="Ribosomal Protein L25, Chain P"/>
    <property type="match status" value="1"/>
</dbReference>
<dbReference type="HAMAP" id="MF_01336">
    <property type="entry name" value="Ribosomal_bL25"/>
    <property type="match status" value="1"/>
</dbReference>
<dbReference type="HAMAP" id="MF_01334">
    <property type="entry name" value="Ribosomal_bL25_CTC"/>
    <property type="match status" value="1"/>
</dbReference>
<dbReference type="InterPro" id="IPR020056">
    <property type="entry name" value="Rbsml_bL25/Gln-tRNA_synth_N"/>
</dbReference>
<dbReference type="InterPro" id="IPR011035">
    <property type="entry name" value="Ribosomal_bL25/Gln-tRNA_synth"/>
</dbReference>
<dbReference type="InterPro" id="IPR020057">
    <property type="entry name" value="Ribosomal_bL25_b-dom"/>
</dbReference>
<dbReference type="InterPro" id="IPR037121">
    <property type="entry name" value="Ribosomal_bL25_C"/>
</dbReference>
<dbReference type="InterPro" id="IPR001021">
    <property type="entry name" value="Ribosomal_bL25_long"/>
</dbReference>
<dbReference type="InterPro" id="IPR020055">
    <property type="entry name" value="Ribosomal_bL25_short"/>
</dbReference>
<dbReference type="InterPro" id="IPR029751">
    <property type="entry name" value="Ribosomal_L25_dom"/>
</dbReference>
<dbReference type="InterPro" id="IPR020930">
    <property type="entry name" value="Ribosomal_uL5_bac-type"/>
</dbReference>
<dbReference type="NCBIfam" id="TIGR00731">
    <property type="entry name" value="bL25_bact_ctc"/>
    <property type="match status" value="1"/>
</dbReference>
<dbReference type="NCBIfam" id="NF004128">
    <property type="entry name" value="PRK05618.1-2"/>
    <property type="match status" value="1"/>
</dbReference>
<dbReference type="NCBIfam" id="NF004130">
    <property type="entry name" value="PRK05618.1-5"/>
    <property type="match status" value="1"/>
</dbReference>
<dbReference type="NCBIfam" id="NF004612">
    <property type="entry name" value="PRK05943.1"/>
    <property type="match status" value="1"/>
</dbReference>
<dbReference type="PANTHER" id="PTHR33284">
    <property type="entry name" value="RIBOSOMAL PROTEIN L25/GLN-TRNA SYNTHETASE, ANTI-CODON-BINDING DOMAIN-CONTAINING PROTEIN"/>
    <property type="match status" value="1"/>
</dbReference>
<dbReference type="PANTHER" id="PTHR33284:SF1">
    <property type="entry name" value="RIBOSOMAL PROTEIN L25_GLN-TRNA SYNTHETASE, ANTI-CODON-BINDING DOMAIN-CONTAINING PROTEIN"/>
    <property type="match status" value="1"/>
</dbReference>
<dbReference type="Pfam" id="PF01386">
    <property type="entry name" value="Ribosomal_L25p"/>
    <property type="match status" value="1"/>
</dbReference>
<dbReference type="Pfam" id="PF14693">
    <property type="entry name" value="Ribosomal_TL5_C"/>
    <property type="match status" value="1"/>
</dbReference>
<dbReference type="SUPFAM" id="SSF50715">
    <property type="entry name" value="Ribosomal protein L25-like"/>
    <property type="match status" value="1"/>
</dbReference>
<name>RL25_AROAE</name>
<comment type="function">
    <text evidence="1">This is one of the proteins that binds to the 5S RNA in the ribosome where it forms part of the central protuberance.</text>
</comment>
<comment type="subunit">
    <text evidence="1">Part of the 50S ribosomal subunit; part of the 5S rRNA/L5/L18/L25 subcomplex. Contacts the 5S rRNA. Binds to the 5S rRNA independently of L5 and L18.</text>
</comment>
<comment type="similarity">
    <text evidence="1">Belongs to the bacterial ribosomal protein bL25 family. CTC subfamily.</text>
</comment>
<sequence>MQIVFKATQRVEQGTGASRRLRRAGQIPGIIYGADTDAQAITVDHNELYHLLKKETFHASVLMIELEGAKHTVVLRDVQWHPYKQQVLHLDFQRIDAGHQLHLKVPLHFINNDTNPAVKLGGCMISHTMTELDIACLPANLPEFIEVDLQSLEAGQSIHVSQLKLPEGVEAVHHGEGDPVVATALTVKGGAAEATEGEVAA</sequence>
<accession>Q5P723</accession>
<organism>
    <name type="scientific">Aromatoleum aromaticum (strain DSM 19018 / LMG 30748 / EbN1)</name>
    <name type="common">Azoarcus sp. (strain EbN1)</name>
    <dbReference type="NCBI Taxonomy" id="76114"/>
    <lineage>
        <taxon>Bacteria</taxon>
        <taxon>Pseudomonadati</taxon>
        <taxon>Pseudomonadota</taxon>
        <taxon>Betaproteobacteria</taxon>
        <taxon>Rhodocyclales</taxon>
        <taxon>Rhodocyclaceae</taxon>
        <taxon>Aromatoleum</taxon>
    </lineage>
</organism>
<protein>
    <recommendedName>
        <fullName evidence="1">Large ribosomal subunit protein bL25</fullName>
    </recommendedName>
    <alternativeName>
        <fullName evidence="2">50S ribosomal protein L25</fullName>
    </alternativeName>
    <alternativeName>
        <fullName evidence="1">General stress protein CTC</fullName>
    </alternativeName>
</protein>
<feature type="chain" id="PRO_0000181507" description="Large ribosomal subunit protein bL25">
    <location>
        <begin position="1"/>
        <end position="201"/>
    </location>
</feature>